<proteinExistence type="inferred from homology"/>
<accession>Q9KQM6</accession>
<gene>
    <name evidence="1" type="primary">menC</name>
    <name type="ordered locus">VC_1972</name>
</gene>
<keyword id="KW-0456">Lyase</keyword>
<keyword id="KW-0460">Magnesium</keyword>
<keyword id="KW-0474">Menaquinone biosynthesis</keyword>
<keyword id="KW-0479">Metal-binding</keyword>
<keyword id="KW-1185">Reference proteome</keyword>
<comment type="function">
    <text evidence="1">Converts 2-succinyl-6-hydroxy-2,4-cyclohexadiene-1-carboxylate (SHCHC) to 2-succinylbenzoate (OSB).</text>
</comment>
<comment type="catalytic activity">
    <reaction evidence="1">
        <text>(1R,6R)-6-hydroxy-2-succinyl-cyclohexa-2,4-diene-1-carboxylate = 2-succinylbenzoate + H2O</text>
        <dbReference type="Rhea" id="RHEA:10196"/>
        <dbReference type="ChEBI" id="CHEBI:15377"/>
        <dbReference type="ChEBI" id="CHEBI:18325"/>
        <dbReference type="ChEBI" id="CHEBI:58689"/>
        <dbReference type="EC" id="4.2.1.113"/>
    </reaction>
</comment>
<comment type="cofactor">
    <cofactor evidence="1">
        <name>a divalent metal cation</name>
        <dbReference type="ChEBI" id="CHEBI:60240"/>
    </cofactor>
</comment>
<comment type="pathway">
    <text evidence="1">Quinol/quinone metabolism; 1,4-dihydroxy-2-naphthoate biosynthesis; 1,4-dihydroxy-2-naphthoate from chorismate: step 4/7.</text>
</comment>
<comment type="pathway">
    <text evidence="1">Quinol/quinone metabolism; menaquinone biosynthesis.</text>
</comment>
<comment type="similarity">
    <text evidence="1">Belongs to the mandelate racemase/muconate lactonizing enzyme family. MenC type 1 subfamily.</text>
</comment>
<organism>
    <name type="scientific">Vibrio cholerae serotype O1 (strain ATCC 39315 / El Tor Inaba N16961)</name>
    <dbReference type="NCBI Taxonomy" id="243277"/>
    <lineage>
        <taxon>Bacteria</taxon>
        <taxon>Pseudomonadati</taxon>
        <taxon>Pseudomonadota</taxon>
        <taxon>Gammaproteobacteria</taxon>
        <taxon>Vibrionales</taxon>
        <taxon>Vibrionaceae</taxon>
        <taxon>Vibrio</taxon>
    </lineage>
</organism>
<feature type="chain" id="PRO_0000171276" description="o-succinylbenzoate synthase">
    <location>
        <begin position="1"/>
        <end position="332"/>
    </location>
</feature>
<feature type="active site" description="Proton donor" evidence="1">
    <location>
        <position position="135"/>
    </location>
</feature>
<feature type="active site" description="Proton acceptor" evidence="1">
    <location>
        <position position="241"/>
    </location>
</feature>
<feature type="binding site" evidence="1">
    <location>
        <position position="163"/>
    </location>
    <ligand>
        <name>Mg(2+)</name>
        <dbReference type="ChEBI" id="CHEBI:18420"/>
    </ligand>
</feature>
<feature type="binding site" evidence="1">
    <location>
        <position position="192"/>
    </location>
    <ligand>
        <name>Mg(2+)</name>
        <dbReference type="ChEBI" id="CHEBI:18420"/>
    </ligand>
</feature>
<feature type="binding site" evidence="1">
    <location>
        <position position="215"/>
    </location>
    <ligand>
        <name>Mg(2+)</name>
        <dbReference type="ChEBI" id="CHEBI:18420"/>
    </ligand>
</feature>
<protein>
    <recommendedName>
        <fullName evidence="1">o-succinylbenzoate synthase</fullName>
        <shortName evidence="1">OSB synthase</shortName>
        <shortName evidence="1">OSBS</shortName>
        <ecNumber evidence="1">4.2.1.113</ecNumber>
    </recommendedName>
    <alternativeName>
        <fullName evidence="1">4-(2'-carboxyphenyl)-4-oxybutyric acid synthase</fullName>
    </alternativeName>
    <alternativeName>
        <fullName evidence="1">o-succinylbenzoic acid synthase</fullName>
    </alternativeName>
</protein>
<name>MENC_VIBCH</name>
<sequence>MRHATLYRYQLPMDSGVILRNEKLTQREGFIVELTENGRTARGEIAPLPGFSRETLEDAGLQAQALLEQWVKGHAIEWDAQHPSVAFGLSMAHYELEQALPEQGNYYVAPLCTGDPDELLPVLNNLPGQKVAKVKVGLYEPIRDGMLVNLFLESMPDLTLRLDANRAWTPAKALKFAQYVAPSLRSRIAFLEEPCQSPSESIAFSIDTGIAIAWDETLQEAVRDADFALENLLGVKTIVIKPTLIGSVYRVEALIEKAKTLGLQAVISSSLESSLGLNQLARLAHKLLPNEVPGLDTIGLFRAQLETPWPNSSLPVVALQEQSIVWRSESSL</sequence>
<reference key="1">
    <citation type="journal article" date="2000" name="Nature">
        <title>DNA sequence of both chromosomes of the cholera pathogen Vibrio cholerae.</title>
        <authorList>
            <person name="Heidelberg J.F."/>
            <person name="Eisen J.A."/>
            <person name="Nelson W.C."/>
            <person name="Clayton R.A."/>
            <person name="Gwinn M.L."/>
            <person name="Dodson R.J."/>
            <person name="Haft D.H."/>
            <person name="Hickey E.K."/>
            <person name="Peterson J.D."/>
            <person name="Umayam L.A."/>
            <person name="Gill S.R."/>
            <person name="Nelson K.E."/>
            <person name="Read T.D."/>
            <person name="Tettelin H."/>
            <person name="Richardson D.L."/>
            <person name="Ermolaeva M.D."/>
            <person name="Vamathevan J.J."/>
            <person name="Bass S."/>
            <person name="Qin H."/>
            <person name="Dragoi I."/>
            <person name="Sellers P."/>
            <person name="McDonald L.A."/>
            <person name="Utterback T.R."/>
            <person name="Fleischmann R.D."/>
            <person name="Nierman W.C."/>
            <person name="White O."/>
            <person name="Salzberg S.L."/>
            <person name="Smith H.O."/>
            <person name="Colwell R.R."/>
            <person name="Mekalanos J.J."/>
            <person name="Venter J.C."/>
            <person name="Fraser C.M."/>
        </authorList>
    </citation>
    <scope>NUCLEOTIDE SEQUENCE [LARGE SCALE GENOMIC DNA]</scope>
    <source>
        <strain>ATCC 39315 / El Tor Inaba N16961</strain>
    </source>
</reference>
<evidence type="ECO:0000255" key="1">
    <source>
        <dbReference type="HAMAP-Rule" id="MF_00470"/>
    </source>
</evidence>
<dbReference type="EC" id="4.2.1.113" evidence="1"/>
<dbReference type="EMBL" id="AE003852">
    <property type="protein sequence ID" value="AAF95120.1"/>
    <property type="molecule type" value="Genomic_DNA"/>
</dbReference>
<dbReference type="PIR" id="F82134">
    <property type="entry name" value="F82134"/>
</dbReference>
<dbReference type="RefSeq" id="NP_231606.1">
    <property type="nucleotide sequence ID" value="NC_002505.1"/>
</dbReference>
<dbReference type="RefSeq" id="WP_001215211.1">
    <property type="nucleotide sequence ID" value="NZ_LT906614.1"/>
</dbReference>
<dbReference type="SMR" id="Q9KQM6"/>
<dbReference type="STRING" id="243277.VC_1972"/>
<dbReference type="DNASU" id="2613476"/>
<dbReference type="EnsemblBacteria" id="AAF95120">
    <property type="protein sequence ID" value="AAF95120"/>
    <property type="gene ID" value="VC_1972"/>
</dbReference>
<dbReference type="KEGG" id="vch:VC_1972"/>
<dbReference type="PATRIC" id="fig|243277.26.peg.1884"/>
<dbReference type="eggNOG" id="COG1441">
    <property type="taxonomic scope" value="Bacteria"/>
</dbReference>
<dbReference type="HOGENOM" id="CLU_030273_0_1_6"/>
<dbReference type="UniPathway" id="UPA00079"/>
<dbReference type="UniPathway" id="UPA01057">
    <property type="reaction ID" value="UER00165"/>
</dbReference>
<dbReference type="Proteomes" id="UP000000584">
    <property type="component" value="Chromosome 1"/>
</dbReference>
<dbReference type="GO" id="GO:0016836">
    <property type="term" value="F:hydro-lyase activity"/>
    <property type="evidence" value="ECO:0000318"/>
    <property type="project" value="GO_Central"/>
</dbReference>
<dbReference type="GO" id="GO:0000287">
    <property type="term" value="F:magnesium ion binding"/>
    <property type="evidence" value="ECO:0007669"/>
    <property type="project" value="UniProtKB-UniRule"/>
</dbReference>
<dbReference type="GO" id="GO:0043748">
    <property type="term" value="F:O-succinylbenzoate synthase activity"/>
    <property type="evidence" value="ECO:0007669"/>
    <property type="project" value="UniProtKB-EC"/>
</dbReference>
<dbReference type="GO" id="GO:0009234">
    <property type="term" value="P:menaquinone biosynthetic process"/>
    <property type="evidence" value="ECO:0000318"/>
    <property type="project" value="GO_Central"/>
</dbReference>
<dbReference type="CDD" id="cd03320">
    <property type="entry name" value="OSBS"/>
    <property type="match status" value="1"/>
</dbReference>
<dbReference type="Gene3D" id="3.20.20.120">
    <property type="entry name" value="Enolase-like C-terminal domain"/>
    <property type="match status" value="1"/>
</dbReference>
<dbReference type="Gene3D" id="3.30.390.10">
    <property type="entry name" value="Enolase-like, N-terminal domain"/>
    <property type="match status" value="1"/>
</dbReference>
<dbReference type="HAMAP" id="MF_00470">
    <property type="entry name" value="MenC_1"/>
    <property type="match status" value="1"/>
</dbReference>
<dbReference type="InterPro" id="IPR036849">
    <property type="entry name" value="Enolase-like_C_sf"/>
</dbReference>
<dbReference type="InterPro" id="IPR029017">
    <property type="entry name" value="Enolase-like_N"/>
</dbReference>
<dbReference type="InterPro" id="IPR029065">
    <property type="entry name" value="Enolase_C-like"/>
</dbReference>
<dbReference type="InterPro" id="IPR013342">
    <property type="entry name" value="Mandelate_racemase_C"/>
</dbReference>
<dbReference type="InterPro" id="IPR010196">
    <property type="entry name" value="OSB_synthase_MenC1"/>
</dbReference>
<dbReference type="InterPro" id="IPR041338">
    <property type="entry name" value="OSBS_N"/>
</dbReference>
<dbReference type="NCBIfam" id="TIGR01927">
    <property type="entry name" value="menC_gam_Gplu"/>
    <property type="match status" value="1"/>
</dbReference>
<dbReference type="NCBIfam" id="NF003473">
    <property type="entry name" value="PRK05105.1"/>
    <property type="match status" value="1"/>
</dbReference>
<dbReference type="PANTHER" id="PTHR48073:SF2">
    <property type="entry name" value="O-SUCCINYLBENZOATE SYNTHASE"/>
    <property type="match status" value="1"/>
</dbReference>
<dbReference type="PANTHER" id="PTHR48073">
    <property type="entry name" value="O-SUCCINYLBENZOATE SYNTHASE-RELATED"/>
    <property type="match status" value="1"/>
</dbReference>
<dbReference type="Pfam" id="PF21508">
    <property type="entry name" value="MenC_N"/>
    <property type="match status" value="1"/>
</dbReference>
<dbReference type="Pfam" id="PF13378">
    <property type="entry name" value="MR_MLE_C"/>
    <property type="match status" value="1"/>
</dbReference>
<dbReference type="SFLD" id="SFLDS00001">
    <property type="entry name" value="Enolase"/>
    <property type="match status" value="1"/>
</dbReference>
<dbReference type="SFLD" id="SFLDF00009">
    <property type="entry name" value="o-succinylbenzoate_synthase"/>
    <property type="match status" value="1"/>
</dbReference>
<dbReference type="SMART" id="SM00922">
    <property type="entry name" value="MR_MLE"/>
    <property type="match status" value="1"/>
</dbReference>
<dbReference type="SUPFAM" id="SSF51604">
    <property type="entry name" value="Enolase C-terminal domain-like"/>
    <property type="match status" value="1"/>
</dbReference>
<dbReference type="SUPFAM" id="SSF54826">
    <property type="entry name" value="Enolase N-terminal domain-like"/>
    <property type="match status" value="1"/>
</dbReference>